<reference key="1">
    <citation type="journal article" date="2001" name="Lancet">
        <title>Whole genome sequencing of meticillin-resistant Staphylococcus aureus.</title>
        <authorList>
            <person name="Kuroda M."/>
            <person name="Ohta T."/>
            <person name="Uchiyama I."/>
            <person name="Baba T."/>
            <person name="Yuzawa H."/>
            <person name="Kobayashi I."/>
            <person name="Cui L."/>
            <person name="Oguchi A."/>
            <person name="Aoki K."/>
            <person name="Nagai Y."/>
            <person name="Lian J.-Q."/>
            <person name="Ito T."/>
            <person name="Kanamori M."/>
            <person name="Matsumaru H."/>
            <person name="Maruyama A."/>
            <person name="Murakami H."/>
            <person name="Hosoyama A."/>
            <person name="Mizutani-Ui Y."/>
            <person name="Takahashi N.K."/>
            <person name="Sawano T."/>
            <person name="Inoue R."/>
            <person name="Kaito C."/>
            <person name="Sekimizu K."/>
            <person name="Hirakawa H."/>
            <person name="Kuhara S."/>
            <person name="Goto S."/>
            <person name="Yabuzaki J."/>
            <person name="Kanehisa M."/>
            <person name="Yamashita A."/>
            <person name="Oshima K."/>
            <person name="Furuya K."/>
            <person name="Yoshino C."/>
            <person name="Shiba T."/>
            <person name="Hattori M."/>
            <person name="Ogasawara N."/>
            <person name="Hayashi H."/>
            <person name="Hiramatsu K."/>
        </authorList>
    </citation>
    <scope>NUCLEOTIDE SEQUENCE [LARGE SCALE GENOMIC DNA]</scope>
    <source>
        <strain>Mu50 / ATCC 700699</strain>
    </source>
</reference>
<gene>
    <name evidence="1" type="primary">mraZ</name>
    <name type="ordered locus">SAV1178</name>
</gene>
<sequence length="143" mass="17238">MFMGEYDHQLDTKGRMIIPSKFRYDLNERFIITRGLDKCLFGYTLDEWQQIEEKMKTLPMTKKDARKFMRMFFSGAVEVELDKQGRINIPQNLRKYANLTKECTVIGVSNRIEIWDRETWNDFYEESEESFEDIAEDLIDFDF</sequence>
<name>MRAZ_STAAM</name>
<feature type="chain" id="PRO_0000108539" description="Transcriptional regulator MraZ">
    <location>
        <begin position="1"/>
        <end position="143"/>
    </location>
</feature>
<feature type="domain" description="SpoVT-AbrB 1" evidence="2">
    <location>
        <begin position="5"/>
        <end position="47"/>
    </location>
</feature>
<feature type="domain" description="SpoVT-AbrB 2" evidence="2">
    <location>
        <begin position="76"/>
        <end position="119"/>
    </location>
</feature>
<evidence type="ECO:0000255" key="1">
    <source>
        <dbReference type="HAMAP-Rule" id="MF_01008"/>
    </source>
</evidence>
<evidence type="ECO:0000255" key="2">
    <source>
        <dbReference type="PROSITE-ProRule" id="PRU01076"/>
    </source>
</evidence>
<keyword id="KW-0963">Cytoplasm</keyword>
<keyword id="KW-0238">DNA-binding</keyword>
<keyword id="KW-0677">Repeat</keyword>
<keyword id="KW-0804">Transcription</keyword>
<keyword id="KW-0805">Transcription regulation</keyword>
<dbReference type="EMBL" id="BA000017">
    <property type="protein sequence ID" value="BAB57340.1"/>
    <property type="molecule type" value="Genomic_DNA"/>
</dbReference>
<dbReference type="RefSeq" id="WP_000480800.1">
    <property type="nucleotide sequence ID" value="NC_002758.2"/>
</dbReference>
<dbReference type="SMR" id="P65438"/>
<dbReference type="GeneID" id="66839371"/>
<dbReference type="KEGG" id="sav:SAV1178"/>
<dbReference type="HOGENOM" id="CLU_107907_0_5_9"/>
<dbReference type="PhylomeDB" id="P65438"/>
<dbReference type="Proteomes" id="UP000002481">
    <property type="component" value="Chromosome"/>
</dbReference>
<dbReference type="GO" id="GO:0005737">
    <property type="term" value="C:cytoplasm"/>
    <property type="evidence" value="ECO:0007669"/>
    <property type="project" value="UniProtKB-UniRule"/>
</dbReference>
<dbReference type="GO" id="GO:0009295">
    <property type="term" value="C:nucleoid"/>
    <property type="evidence" value="ECO:0007669"/>
    <property type="project" value="UniProtKB-SubCell"/>
</dbReference>
<dbReference type="GO" id="GO:0003700">
    <property type="term" value="F:DNA-binding transcription factor activity"/>
    <property type="evidence" value="ECO:0007669"/>
    <property type="project" value="UniProtKB-UniRule"/>
</dbReference>
<dbReference type="GO" id="GO:0000976">
    <property type="term" value="F:transcription cis-regulatory region binding"/>
    <property type="evidence" value="ECO:0007669"/>
    <property type="project" value="TreeGrafter"/>
</dbReference>
<dbReference type="GO" id="GO:2000143">
    <property type="term" value="P:negative regulation of DNA-templated transcription initiation"/>
    <property type="evidence" value="ECO:0007669"/>
    <property type="project" value="TreeGrafter"/>
</dbReference>
<dbReference type="CDD" id="cd16321">
    <property type="entry name" value="MraZ_C"/>
    <property type="match status" value="1"/>
</dbReference>
<dbReference type="CDD" id="cd16320">
    <property type="entry name" value="MraZ_N"/>
    <property type="match status" value="1"/>
</dbReference>
<dbReference type="FunFam" id="3.40.1550.20:FF:000002">
    <property type="entry name" value="Transcriptional regulator MraZ"/>
    <property type="match status" value="1"/>
</dbReference>
<dbReference type="Gene3D" id="3.40.1550.20">
    <property type="entry name" value="Transcriptional regulator MraZ domain"/>
    <property type="match status" value="1"/>
</dbReference>
<dbReference type="HAMAP" id="MF_01008">
    <property type="entry name" value="MraZ"/>
    <property type="match status" value="1"/>
</dbReference>
<dbReference type="InterPro" id="IPR003444">
    <property type="entry name" value="MraZ"/>
</dbReference>
<dbReference type="InterPro" id="IPR035644">
    <property type="entry name" value="MraZ_C"/>
</dbReference>
<dbReference type="InterPro" id="IPR020603">
    <property type="entry name" value="MraZ_dom"/>
</dbReference>
<dbReference type="InterPro" id="IPR035642">
    <property type="entry name" value="MraZ_N"/>
</dbReference>
<dbReference type="InterPro" id="IPR038619">
    <property type="entry name" value="MraZ_sf"/>
</dbReference>
<dbReference type="InterPro" id="IPR007159">
    <property type="entry name" value="SpoVT-AbrB_dom"/>
</dbReference>
<dbReference type="InterPro" id="IPR037914">
    <property type="entry name" value="SpoVT-AbrB_sf"/>
</dbReference>
<dbReference type="NCBIfam" id="TIGR00242">
    <property type="entry name" value="division/cell wall cluster transcriptional repressor MraZ"/>
    <property type="match status" value="1"/>
</dbReference>
<dbReference type="PANTHER" id="PTHR34701">
    <property type="entry name" value="TRANSCRIPTIONAL REGULATOR MRAZ"/>
    <property type="match status" value="1"/>
</dbReference>
<dbReference type="PANTHER" id="PTHR34701:SF1">
    <property type="entry name" value="TRANSCRIPTIONAL REGULATOR MRAZ"/>
    <property type="match status" value="1"/>
</dbReference>
<dbReference type="Pfam" id="PF02381">
    <property type="entry name" value="MraZ"/>
    <property type="match status" value="2"/>
</dbReference>
<dbReference type="SUPFAM" id="SSF89447">
    <property type="entry name" value="AbrB/MazE/MraZ-like"/>
    <property type="match status" value="1"/>
</dbReference>
<dbReference type="PROSITE" id="PS51740">
    <property type="entry name" value="SPOVT_ABRB"/>
    <property type="match status" value="2"/>
</dbReference>
<organism>
    <name type="scientific">Staphylococcus aureus (strain Mu50 / ATCC 700699)</name>
    <dbReference type="NCBI Taxonomy" id="158878"/>
    <lineage>
        <taxon>Bacteria</taxon>
        <taxon>Bacillati</taxon>
        <taxon>Bacillota</taxon>
        <taxon>Bacilli</taxon>
        <taxon>Bacillales</taxon>
        <taxon>Staphylococcaceae</taxon>
        <taxon>Staphylococcus</taxon>
    </lineage>
</organism>
<protein>
    <recommendedName>
        <fullName>Transcriptional regulator MraZ</fullName>
    </recommendedName>
</protein>
<comment type="subunit">
    <text evidence="1">Forms oligomers.</text>
</comment>
<comment type="subcellular location">
    <subcellularLocation>
        <location evidence="1">Cytoplasm</location>
        <location evidence="1">Nucleoid</location>
    </subcellularLocation>
</comment>
<comment type="similarity">
    <text evidence="1">Belongs to the MraZ family.</text>
</comment>
<proteinExistence type="inferred from homology"/>
<accession>P65438</accession>
<accession>Q99UT2</accession>